<evidence type="ECO:0000250" key="1"/>
<evidence type="ECO:0000255" key="2"/>
<evidence type="ECO:0000269" key="3">
    <source>
    </source>
</evidence>
<evidence type="ECO:0000305" key="4"/>
<evidence type="ECO:0007744" key="5">
    <source>
    </source>
</evidence>
<comment type="catalytic activity">
    <reaction evidence="3">
        <text>(2R)-2-phosphoglycerate = phosphoenolpyruvate + H2O</text>
        <dbReference type="Rhea" id="RHEA:10164"/>
        <dbReference type="ChEBI" id="CHEBI:15377"/>
        <dbReference type="ChEBI" id="CHEBI:58289"/>
        <dbReference type="ChEBI" id="CHEBI:58702"/>
        <dbReference type="EC" id="4.2.1.11"/>
    </reaction>
</comment>
<comment type="cofactor">
    <cofactor evidence="1">
        <name>Mg(2+)</name>
        <dbReference type="ChEBI" id="CHEBI:18420"/>
    </cofactor>
    <text evidence="1">Mg(2+) is required for catalysis and for stabilizing the dimer.</text>
</comment>
<comment type="biophysicochemical properties">
    <kinetics>
        <KM evidence="3">0.082 mM for 2-PGA (at pH 8)</KM>
        <KM evidence="3">0.149 mM for 2-PGA (at pH 7)</KM>
        <KM evidence="3">0.18 mM for PEP (at pH 8)</KM>
        <KM evidence="3">0.534 mM for PEP (at pH 7)</KM>
        <KM evidence="3">1.281 mM for 3-PGA (at pH 8)</KM>
        <KM evidence="3">0.39 mM for 3-PGA (at pH 7)</KM>
    </kinetics>
    <phDependence>
        <text evidence="3">Optimum pH is 7.5-8.5 for the forward reaction (PEP formation) and 6.0-7.5 for the reverse reaction (2-PGA formation).</text>
    </phDependence>
</comment>
<comment type="pathway">
    <text>Carbohydrate degradation; glycolysis; pyruvate from D-glyceraldehyde 3-phosphate: step 4/5.</text>
</comment>
<comment type="subcellular location">
    <subcellularLocation>
        <location evidence="4">Plastid</location>
        <location evidence="4">Chloroplast</location>
    </subcellularLocation>
</comment>
<comment type="tissue specificity">
    <text evidence="3">Highly expressed in young roots, young siliques, and shoot apex. Lowly expressed in young leaves, stems and cotyledons.</text>
</comment>
<comment type="disruption phenotype">
    <text evidence="3">Distorted trichomes and reduced numbers of root hairs.</text>
</comment>
<comment type="similarity">
    <text evidence="4">Belongs to the enolase family.</text>
</comment>
<keyword id="KW-0150">Chloroplast</keyword>
<keyword id="KW-0324">Glycolysis</keyword>
<keyword id="KW-0456">Lyase</keyword>
<keyword id="KW-0460">Magnesium</keyword>
<keyword id="KW-0479">Metal-binding</keyword>
<keyword id="KW-0597">Phosphoprotein</keyword>
<keyword id="KW-0934">Plastid</keyword>
<keyword id="KW-1185">Reference proteome</keyword>
<keyword id="KW-0809">Transit peptide</keyword>
<dbReference type="EC" id="4.2.1.11"/>
<dbReference type="EMBL" id="AC016662">
    <property type="protein sequence ID" value="AAG52510.1"/>
    <property type="molecule type" value="Genomic_DNA"/>
</dbReference>
<dbReference type="EMBL" id="CP002684">
    <property type="protein sequence ID" value="AEE35539.1"/>
    <property type="molecule type" value="Genomic_DNA"/>
</dbReference>
<dbReference type="EMBL" id="AY034978">
    <property type="protein sequence ID" value="AAK59483.1"/>
    <property type="molecule type" value="mRNA"/>
</dbReference>
<dbReference type="EMBL" id="AY062968">
    <property type="protein sequence ID" value="AAL33814.1"/>
    <property type="molecule type" value="mRNA"/>
</dbReference>
<dbReference type="PIR" id="B96768">
    <property type="entry name" value="B96768"/>
</dbReference>
<dbReference type="RefSeq" id="NP_177543.1">
    <property type="nucleotide sequence ID" value="NM_106062.4"/>
</dbReference>
<dbReference type="SMR" id="Q9C9C4"/>
<dbReference type="BioGRID" id="28960">
    <property type="interactions" value="1"/>
</dbReference>
<dbReference type="FunCoup" id="Q9C9C4">
    <property type="interactions" value="1356"/>
</dbReference>
<dbReference type="IntAct" id="Q9C9C4">
    <property type="interactions" value="1"/>
</dbReference>
<dbReference type="STRING" id="3702.Q9C9C4"/>
<dbReference type="iPTMnet" id="Q9C9C4"/>
<dbReference type="MetOSite" id="Q9C9C4"/>
<dbReference type="PaxDb" id="3702-AT1G74030.1"/>
<dbReference type="ProteomicsDB" id="220505"/>
<dbReference type="EnsemblPlants" id="AT1G74030.1">
    <property type="protein sequence ID" value="AT1G74030.1"/>
    <property type="gene ID" value="AT1G74030"/>
</dbReference>
<dbReference type="GeneID" id="843741"/>
<dbReference type="Gramene" id="AT1G74030.1">
    <property type="protein sequence ID" value="AT1G74030.1"/>
    <property type="gene ID" value="AT1G74030"/>
</dbReference>
<dbReference type="KEGG" id="ath:AT1G74030"/>
<dbReference type="Araport" id="AT1G74030"/>
<dbReference type="TAIR" id="AT1G74030">
    <property type="gene designation" value="ENO1"/>
</dbReference>
<dbReference type="eggNOG" id="KOG2670">
    <property type="taxonomic scope" value="Eukaryota"/>
</dbReference>
<dbReference type="HOGENOM" id="CLU_031223_2_1_1"/>
<dbReference type="InParanoid" id="Q9C9C4"/>
<dbReference type="OMA" id="RCMMSHR"/>
<dbReference type="PhylomeDB" id="Q9C9C4"/>
<dbReference type="BioCyc" id="ARA:AT1G74030-MONOMER"/>
<dbReference type="UniPathway" id="UPA00109">
    <property type="reaction ID" value="UER00187"/>
</dbReference>
<dbReference type="CD-CODE" id="4299E36E">
    <property type="entry name" value="Nucleolus"/>
</dbReference>
<dbReference type="PRO" id="PR:Q9C9C4"/>
<dbReference type="Proteomes" id="UP000006548">
    <property type="component" value="Chromosome 1"/>
</dbReference>
<dbReference type="ExpressionAtlas" id="Q9C9C4">
    <property type="expression patterns" value="baseline and differential"/>
</dbReference>
<dbReference type="GO" id="GO:0009507">
    <property type="term" value="C:chloroplast"/>
    <property type="evidence" value="ECO:0000314"/>
    <property type="project" value="TAIR"/>
</dbReference>
<dbReference type="GO" id="GO:0009570">
    <property type="term" value="C:chloroplast stroma"/>
    <property type="evidence" value="ECO:0007005"/>
    <property type="project" value="TAIR"/>
</dbReference>
<dbReference type="GO" id="GO:0000015">
    <property type="term" value="C:phosphopyruvate hydratase complex"/>
    <property type="evidence" value="ECO:0007669"/>
    <property type="project" value="InterPro"/>
</dbReference>
<dbReference type="GO" id="GO:0000287">
    <property type="term" value="F:magnesium ion binding"/>
    <property type="evidence" value="ECO:0007669"/>
    <property type="project" value="InterPro"/>
</dbReference>
<dbReference type="GO" id="GO:0004634">
    <property type="term" value="F:phosphopyruvate hydratase activity"/>
    <property type="evidence" value="ECO:0000314"/>
    <property type="project" value="TAIR"/>
</dbReference>
<dbReference type="GO" id="GO:0006096">
    <property type="term" value="P:glycolytic process"/>
    <property type="evidence" value="ECO:0007669"/>
    <property type="project" value="UniProtKB-UniPathway"/>
</dbReference>
<dbReference type="GO" id="GO:0010090">
    <property type="term" value="P:trichome morphogenesis"/>
    <property type="evidence" value="ECO:0000315"/>
    <property type="project" value="TAIR"/>
</dbReference>
<dbReference type="CDD" id="cd03313">
    <property type="entry name" value="enolase"/>
    <property type="match status" value="1"/>
</dbReference>
<dbReference type="FunFam" id="3.30.390.10:FF:000001">
    <property type="entry name" value="Enolase"/>
    <property type="match status" value="1"/>
</dbReference>
<dbReference type="FunFam" id="3.20.20.120:FF:000002">
    <property type="entry name" value="Enolase 1"/>
    <property type="match status" value="1"/>
</dbReference>
<dbReference type="Gene3D" id="3.20.20.120">
    <property type="entry name" value="Enolase-like C-terminal domain"/>
    <property type="match status" value="1"/>
</dbReference>
<dbReference type="Gene3D" id="3.30.390.10">
    <property type="entry name" value="Enolase-like, N-terminal domain"/>
    <property type="match status" value="1"/>
</dbReference>
<dbReference type="HAMAP" id="MF_00318">
    <property type="entry name" value="Enolase"/>
    <property type="match status" value="1"/>
</dbReference>
<dbReference type="InterPro" id="IPR000941">
    <property type="entry name" value="Enolase"/>
</dbReference>
<dbReference type="InterPro" id="IPR036849">
    <property type="entry name" value="Enolase-like_C_sf"/>
</dbReference>
<dbReference type="InterPro" id="IPR029017">
    <property type="entry name" value="Enolase-like_N"/>
</dbReference>
<dbReference type="InterPro" id="IPR020810">
    <property type="entry name" value="Enolase_C"/>
</dbReference>
<dbReference type="InterPro" id="IPR020809">
    <property type="entry name" value="Enolase_CS"/>
</dbReference>
<dbReference type="InterPro" id="IPR020811">
    <property type="entry name" value="Enolase_N"/>
</dbReference>
<dbReference type="NCBIfam" id="TIGR01060">
    <property type="entry name" value="eno"/>
    <property type="match status" value="1"/>
</dbReference>
<dbReference type="PANTHER" id="PTHR11902">
    <property type="entry name" value="ENOLASE"/>
    <property type="match status" value="1"/>
</dbReference>
<dbReference type="PANTHER" id="PTHR11902:SF42">
    <property type="entry name" value="ENOLASE 1, CHLOROPLASTIC"/>
    <property type="match status" value="1"/>
</dbReference>
<dbReference type="Pfam" id="PF00113">
    <property type="entry name" value="Enolase_C"/>
    <property type="match status" value="1"/>
</dbReference>
<dbReference type="Pfam" id="PF03952">
    <property type="entry name" value="Enolase_N"/>
    <property type="match status" value="1"/>
</dbReference>
<dbReference type="PIRSF" id="PIRSF001400">
    <property type="entry name" value="Enolase"/>
    <property type="match status" value="1"/>
</dbReference>
<dbReference type="PRINTS" id="PR00148">
    <property type="entry name" value="ENOLASE"/>
</dbReference>
<dbReference type="SFLD" id="SFLDS00001">
    <property type="entry name" value="Enolase"/>
    <property type="match status" value="1"/>
</dbReference>
<dbReference type="SFLD" id="SFLDF00002">
    <property type="entry name" value="enolase"/>
    <property type="match status" value="1"/>
</dbReference>
<dbReference type="SMART" id="SM01192">
    <property type="entry name" value="Enolase_C"/>
    <property type="match status" value="1"/>
</dbReference>
<dbReference type="SMART" id="SM01193">
    <property type="entry name" value="Enolase_N"/>
    <property type="match status" value="1"/>
</dbReference>
<dbReference type="SUPFAM" id="SSF51604">
    <property type="entry name" value="Enolase C-terminal domain-like"/>
    <property type="match status" value="1"/>
</dbReference>
<dbReference type="SUPFAM" id="SSF54826">
    <property type="entry name" value="Enolase N-terminal domain-like"/>
    <property type="match status" value="1"/>
</dbReference>
<dbReference type="PROSITE" id="PS00164">
    <property type="entry name" value="ENOLASE"/>
    <property type="match status" value="1"/>
</dbReference>
<proteinExistence type="evidence at protein level"/>
<accession>Q9C9C4</accession>
<reference key="1">
    <citation type="journal article" date="2000" name="Nature">
        <title>Sequence and analysis of chromosome 1 of the plant Arabidopsis thaliana.</title>
        <authorList>
            <person name="Theologis A."/>
            <person name="Ecker J.R."/>
            <person name="Palm C.J."/>
            <person name="Federspiel N.A."/>
            <person name="Kaul S."/>
            <person name="White O."/>
            <person name="Alonso J."/>
            <person name="Altafi H."/>
            <person name="Araujo R."/>
            <person name="Bowman C.L."/>
            <person name="Brooks S.Y."/>
            <person name="Buehler E."/>
            <person name="Chan A."/>
            <person name="Chao Q."/>
            <person name="Chen H."/>
            <person name="Cheuk R.F."/>
            <person name="Chin C.W."/>
            <person name="Chung M.K."/>
            <person name="Conn L."/>
            <person name="Conway A.B."/>
            <person name="Conway A.R."/>
            <person name="Creasy T.H."/>
            <person name="Dewar K."/>
            <person name="Dunn P."/>
            <person name="Etgu P."/>
            <person name="Feldblyum T.V."/>
            <person name="Feng J.-D."/>
            <person name="Fong B."/>
            <person name="Fujii C.Y."/>
            <person name="Gill J.E."/>
            <person name="Goldsmith A.D."/>
            <person name="Haas B."/>
            <person name="Hansen N.F."/>
            <person name="Hughes B."/>
            <person name="Huizar L."/>
            <person name="Hunter J.L."/>
            <person name="Jenkins J."/>
            <person name="Johnson-Hopson C."/>
            <person name="Khan S."/>
            <person name="Khaykin E."/>
            <person name="Kim C.J."/>
            <person name="Koo H.L."/>
            <person name="Kremenetskaia I."/>
            <person name="Kurtz D.B."/>
            <person name="Kwan A."/>
            <person name="Lam B."/>
            <person name="Langin-Hooper S."/>
            <person name="Lee A."/>
            <person name="Lee J.M."/>
            <person name="Lenz C.A."/>
            <person name="Li J.H."/>
            <person name="Li Y.-P."/>
            <person name="Lin X."/>
            <person name="Liu S.X."/>
            <person name="Liu Z.A."/>
            <person name="Luros J.S."/>
            <person name="Maiti R."/>
            <person name="Marziali A."/>
            <person name="Militscher J."/>
            <person name="Miranda M."/>
            <person name="Nguyen M."/>
            <person name="Nierman W.C."/>
            <person name="Osborne B.I."/>
            <person name="Pai G."/>
            <person name="Peterson J."/>
            <person name="Pham P.K."/>
            <person name="Rizzo M."/>
            <person name="Rooney T."/>
            <person name="Rowley D."/>
            <person name="Sakano H."/>
            <person name="Salzberg S.L."/>
            <person name="Schwartz J.R."/>
            <person name="Shinn P."/>
            <person name="Southwick A.M."/>
            <person name="Sun H."/>
            <person name="Tallon L.J."/>
            <person name="Tambunga G."/>
            <person name="Toriumi M.J."/>
            <person name="Town C.D."/>
            <person name="Utterback T."/>
            <person name="Van Aken S."/>
            <person name="Vaysberg M."/>
            <person name="Vysotskaia V.S."/>
            <person name="Walker M."/>
            <person name="Wu D."/>
            <person name="Yu G."/>
            <person name="Fraser C.M."/>
            <person name="Venter J.C."/>
            <person name="Davis R.W."/>
        </authorList>
    </citation>
    <scope>NUCLEOTIDE SEQUENCE [LARGE SCALE GENOMIC DNA]</scope>
    <source>
        <strain>cv. Columbia</strain>
    </source>
</reference>
<reference key="2">
    <citation type="journal article" date="2017" name="Plant J.">
        <title>Araport11: a complete reannotation of the Arabidopsis thaliana reference genome.</title>
        <authorList>
            <person name="Cheng C.Y."/>
            <person name="Krishnakumar V."/>
            <person name="Chan A.P."/>
            <person name="Thibaud-Nissen F."/>
            <person name="Schobel S."/>
            <person name="Town C.D."/>
        </authorList>
    </citation>
    <scope>GENOME REANNOTATION</scope>
    <source>
        <strain>cv. Columbia</strain>
    </source>
</reference>
<reference key="3">
    <citation type="journal article" date="2003" name="Science">
        <title>Empirical analysis of transcriptional activity in the Arabidopsis genome.</title>
        <authorList>
            <person name="Yamada K."/>
            <person name="Lim J."/>
            <person name="Dale J.M."/>
            <person name="Chen H."/>
            <person name="Shinn P."/>
            <person name="Palm C.J."/>
            <person name="Southwick A.M."/>
            <person name="Wu H.C."/>
            <person name="Kim C.J."/>
            <person name="Nguyen M."/>
            <person name="Pham P.K."/>
            <person name="Cheuk R.F."/>
            <person name="Karlin-Newmann G."/>
            <person name="Liu S.X."/>
            <person name="Lam B."/>
            <person name="Sakano H."/>
            <person name="Wu T."/>
            <person name="Yu G."/>
            <person name="Miranda M."/>
            <person name="Quach H.L."/>
            <person name="Tripp M."/>
            <person name="Chang C.H."/>
            <person name="Lee J.M."/>
            <person name="Toriumi M.J."/>
            <person name="Chan M.M."/>
            <person name="Tang C.C."/>
            <person name="Onodera C.S."/>
            <person name="Deng J.M."/>
            <person name="Akiyama K."/>
            <person name="Ansari Y."/>
            <person name="Arakawa T."/>
            <person name="Banh J."/>
            <person name="Banno F."/>
            <person name="Bowser L."/>
            <person name="Brooks S.Y."/>
            <person name="Carninci P."/>
            <person name="Chao Q."/>
            <person name="Choy N."/>
            <person name="Enju A."/>
            <person name="Goldsmith A.D."/>
            <person name="Gurjal M."/>
            <person name="Hansen N.F."/>
            <person name="Hayashizaki Y."/>
            <person name="Johnson-Hopson C."/>
            <person name="Hsuan V.W."/>
            <person name="Iida K."/>
            <person name="Karnes M."/>
            <person name="Khan S."/>
            <person name="Koesema E."/>
            <person name="Ishida J."/>
            <person name="Jiang P.X."/>
            <person name="Jones T."/>
            <person name="Kawai J."/>
            <person name="Kamiya A."/>
            <person name="Meyers C."/>
            <person name="Nakajima M."/>
            <person name="Narusaka M."/>
            <person name="Seki M."/>
            <person name="Sakurai T."/>
            <person name="Satou M."/>
            <person name="Tamse R."/>
            <person name="Vaysberg M."/>
            <person name="Wallender E.K."/>
            <person name="Wong C."/>
            <person name="Yamamura Y."/>
            <person name="Yuan S."/>
            <person name="Shinozaki K."/>
            <person name="Davis R.W."/>
            <person name="Theologis A."/>
            <person name="Ecker J.R."/>
        </authorList>
    </citation>
    <scope>NUCLEOTIDE SEQUENCE [LARGE SCALE MRNA]</scope>
    <source>
        <strain>cv. Columbia</strain>
    </source>
</reference>
<reference key="4">
    <citation type="journal article" date="2009" name="FEBS Lett.">
        <title>Molecular and functional characterization of the plastid-localized Phosphoenolpyruvate enolase (ENO1) from Arabidopsis thaliana.</title>
        <authorList>
            <person name="Prabhakar V."/>
            <person name="Lottgert T."/>
            <person name="Gigolashvili T."/>
            <person name="Bell K."/>
            <person name="Flugge U.I."/>
            <person name="Hausler R.E."/>
        </authorList>
    </citation>
    <scope>CATALYTIC ACTIVITY</scope>
    <scope>SUBCELLULAR LOCATION</scope>
    <scope>TISSUE SPECIFICITY</scope>
    <scope>DISRUPTION PHENOTYPE</scope>
    <scope>BIOPHYSICOCHEMICAL PROPERTIES</scope>
</reference>
<reference key="5">
    <citation type="journal article" date="2009" name="J. Proteomics">
        <title>Phosphoproteomic analysis of nuclei-enriched fractions from Arabidopsis thaliana.</title>
        <authorList>
            <person name="Jones A.M.E."/>
            <person name="MacLean D."/>
            <person name="Studholme D.J."/>
            <person name="Serna-Sanz A."/>
            <person name="Andreasson E."/>
            <person name="Rathjen J.P."/>
            <person name="Peck S.C."/>
        </authorList>
    </citation>
    <scope>PHOSPHORYLATION [LARGE SCALE ANALYSIS] AT SER-476</scope>
    <scope>IDENTIFICATION BY MASS SPECTROMETRY [LARGE SCALE ANALYSIS]</scope>
    <source>
        <strain>cv. Columbia</strain>
    </source>
</reference>
<gene>
    <name type="primary">ENO1</name>
    <name type="ordered locus">At1g74030</name>
    <name type="ORF">F2P9.10</name>
</gene>
<sequence>MALTTKPHHLQRSFLSPSRVSGERYLESAPSCLRFRRSGVQCSVVAKECRVKGVKARQIIDSRGNPTVEVDLITDDLYRSAVPSGASTGIYEALELRDGDKSVYGGKGVLQAIKNINELVAPKLIGVDVRNQADVDALMLELDGTPNKSKLGANAILGVSLSVCRAGAGAKGVPLYKHIQETSGTKELVMPVPAFNVINGGSHAGNSLAMQEFMILPVGATSFSEAFQMGSEVYHTLKGIIKTKYGQDACNVGDEGGFAPNVQDNREGLVLLIDAIEKAGYTGKIKIGMDVAASEFFMKDGRYDLNFKKQPNDGAHVLSAESLADLYREFIKDFPIVSIEDPFDQDDWSSWASLQSSVDIQLVGDDLLVTNPKRIAEAIKKQSCNALLLKVNQIGTVTESIQAALDSKAAGWGVMVSHRSGETEDNFIADLSVGLASGQIKTGAPCRSERLSKYNQLLRIEEELGNVRYAGEAFRSP</sequence>
<organism>
    <name type="scientific">Arabidopsis thaliana</name>
    <name type="common">Mouse-ear cress</name>
    <dbReference type="NCBI Taxonomy" id="3702"/>
    <lineage>
        <taxon>Eukaryota</taxon>
        <taxon>Viridiplantae</taxon>
        <taxon>Streptophyta</taxon>
        <taxon>Embryophyta</taxon>
        <taxon>Tracheophyta</taxon>
        <taxon>Spermatophyta</taxon>
        <taxon>Magnoliopsida</taxon>
        <taxon>eudicotyledons</taxon>
        <taxon>Gunneridae</taxon>
        <taxon>Pentapetalae</taxon>
        <taxon>rosids</taxon>
        <taxon>malvids</taxon>
        <taxon>Brassicales</taxon>
        <taxon>Brassicaceae</taxon>
        <taxon>Camelineae</taxon>
        <taxon>Arabidopsis</taxon>
    </lineage>
</organism>
<feature type="transit peptide" description="Chloroplast" evidence="2">
    <location>
        <begin position="1"/>
        <end position="41"/>
    </location>
</feature>
<feature type="chain" id="PRO_0000399510" description="Enolase 1, chloroplastic">
    <location>
        <begin position="42"/>
        <end position="477"/>
    </location>
</feature>
<feature type="active site" description="Proton donor" evidence="1">
    <location>
        <position position="255"/>
    </location>
</feature>
<feature type="active site" description="Proton acceptor" evidence="1">
    <location>
        <position position="390"/>
    </location>
</feature>
<feature type="binding site" evidence="1">
    <location>
        <position position="203"/>
    </location>
    <ligand>
        <name>substrate</name>
    </ligand>
</feature>
<feature type="binding site" evidence="1">
    <location>
        <position position="212"/>
    </location>
    <ligand>
        <name>substrate</name>
    </ligand>
</feature>
<feature type="binding site" evidence="1">
    <location>
        <position position="290"/>
    </location>
    <ligand>
        <name>Mg(2+)</name>
        <dbReference type="ChEBI" id="CHEBI:18420"/>
    </ligand>
</feature>
<feature type="binding site" evidence="1">
    <location>
        <position position="340"/>
    </location>
    <ligand>
        <name>Mg(2+)</name>
        <dbReference type="ChEBI" id="CHEBI:18420"/>
    </ligand>
</feature>
<feature type="binding site" evidence="1">
    <location>
        <position position="340"/>
    </location>
    <ligand>
        <name>substrate</name>
    </ligand>
</feature>
<feature type="binding site" evidence="1">
    <location>
        <position position="365"/>
    </location>
    <ligand>
        <name>Mg(2+)</name>
        <dbReference type="ChEBI" id="CHEBI:18420"/>
    </ligand>
</feature>
<feature type="binding site" evidence="1">
    <location>
        <position position="365"/>
    </location>
    <ligand>
        <name>substrate</name>
    </ligand>
</feature>
<feature type="binding site" evidence="1">
    <location>
        <begin position="417"/>
        <end position="420"/>
    </location>
    <ligand>
        <name>substrate</name>
    </ligand>
</feature>
<feature type="binding site" evidence="1">
    <location>
        <position position="441"/>
    </location>
    <ligand>
        <name>substrate</name>
    </ligand>
</feature>
<feature type="modified residue" description="Phosphoserine" evidence="5">
    <location>
        <position position="476"/>
    </location>
</feature>
<protein>
    <recommendedName>
        <fullName>Enolase 1, chloroplastic</fullName>
        <ecNumber>4.2.1.11</ecNumber>
    </recommendedName>
    <alternativeName>
        <fullName>2-phospho-D-glycerate hydro-lyase 1</fullName>
    </alternativeName>
    <alternativeName>
        <fullName>2-phosphoglycerate dehydratase 1</fullName>
    </alternativeName>
</protein>
<name>ENO1_ARATH</name>